<evidence type="ECO:0000250" key="1"/>
<evidence type="ECO:0000255" key="2"/>
<evidence type="ECO:0000255" key="3">
    <source>
        <dbReference type="PROSITE-ProRule" id="PRU00085"/>
    </source>
</evidence>
<evidence type="ECO:0000305" key="4"/>
<organism>
    <name type="scientific">Arabidopsis thaliana</name>
    <name type="common">Mouse-ear cress</name>
    <dbReference type="NCBI Taxonomy" id="3702"/>
    <lineage>
        <taxon>Eukaryota</taxon>
        <taxon>Viridiplantae</taxon>
        <taxon>Streptophyta</taxon>
        <taxon>Embryophyta</taxon>
        <taxon>Tracheophyta</taxon>
        <taxon>Spermatophyta</taxon>
        <taxon>Magnoliopsida</taxon>
        <taxon>eudicotyledons</taxon>
        <taxon>Gunneridae</taxon>
        <taxon>Pentapetalae</taxon>
        <taxon>rosids</taxon>
        <taxon>malvids</taxon>
        <taxon>Brassicales</taxon>
        <taxon>Brassicaceae</taxon>
        <taxon>Camelineae</taxon>
        <taxon>Arabidopsis</taxon>
    </lineage>
</organism>
<feature type="transit peptide" description="Chloroplast" evidence="2">
    <location>
        <begin position="1"/>
        <end position="57"/>
    </location>
</feature>
<feature type="chain" id="PRO_0000008857" description="Ferritin-4, chloroplastic">
    <location>
        <begin position="58"/>
        <end position="259"/>
    </location>
</feature>
<feature type="domain" description="Ferritin-like diiron" evidence="3">
    <location>
        <begin position="91"/>
        <end position="244"/>
    </location>
</feature>
<feature type="region of interest" description="Extension peptide (EP)">
    <location>
        <begin position="58"/>
        <end position="90"/>
    </location>
</feature>
<feature type="binding site" evidence="3">
    <location>
        <position position="108"/>
    </location>
    <ligand>
        <name>Fe cation</name>
        <dbReference type="ChEBI" id="CHEBI:24875"/>
        <label>1</label>
    </ligand>
</feature>
<feature type="binding site" evidence="3">
    <location>
        <position position="143"/>
    </location>
    <ligand>
        <name>Fe cation</name>
        <dbReference type="ChEBI" id="CHEBI:24875"/>
        <label>1</label>
    </ligand>
</feature>
<feature type="binding site" evidence="3">
    <location>
        <position position="143"/>
    </location>
    <ligand>
        <name>Fe cation</name>
        <dbReference type="ChEBI" id="CHEBI:24875"/>
        <label>2</label>
    </ligand>
</feature>
<feature type="binding site" evidence="3">
    <location>
        <position position="146"/>
    </location>
    <ligand>
        <name>Fe cation</name>
        <dbReference type="ChEBI" id="CHEBI:24875"/>
        <label>1</label>
    </ligand>
</feature>
<feature type="binding site" evidence="3">
    <location>
        <position position="192"/>
    </location>
    <ligand>
        <name>Fe cation</name>
        <dbReference type="ChEBI" id="CHEBI:24875"/>
        <label>2</label>
    </ligand>
</feature>
<feature type="binding site" evidence="3">
    <location>
        <position position="226"/>
    </location>
    <ligand>
        <name>Fe cation</name>
        <dbReference type="ChEBI" id="CHEBI:24875"/>
        <label>2</label>
    </ligand>
</feature>
<accession>Q9S756</accession>
<accession>Q8WHW5</accession>
<dbReference type="EC" id="1.16.3.1"/>
<dbReference type="EMBL" id="AJ312191">
    <property type="protein sequence ID" value="CAC85400.1"/>
    <property type="molecule type" value="mRNA"/>
</dbReference>
<dbReference type="EMBL" id="AF085279">
    <property type="protein sequence ID" value="AAD25945.1"/>
    <property type="molecule type" value="Genomic_DNA"/>
</dbReference>
<dbReference type="EMBL" id="AC007020">
    <property type="protein sequence ID" value="AAD25665.1"/>
    <property type="molecule type" value="Genomic_DNA"/>
</dbReference>
<dbReference type="EMBL" id="CP002685">
    <property type="protein sequence ID" value="AEC09810.1"/>
    <property type="molecule type" value="Genomic_DNA"/>
</dbReference>
<dbReference type="EMBL" id="AY062795">
    <property type="protein sequence ID" value="AAL32873.1"/>
    <property type="molecule type" value="mRNA"/>
</dbReference>
<dbReference type="EMBL" id="AY081615">
    <property type="protein sequence ID" value="AAM10177.1"/>
    <property type="molecule type" value="mRNA"/>
</dbReference>
<dbReference type="PIR" id="G84827">
    <property type="entry name" value="G84827"/>
</dbReference>
<dbReference type="RefSeq" id="NP_181559.1">
    <property type="nucleotide sequence ID" value="NM_129588.5"/>
</dbReference>
<dbReference type="SMR" id="Q9S756"/>
<dbReference type="BioGRID" id="3960">
    <property type="interactions" value="1"/>
</dbReference>
<dbReference type="FunCoup" id="Q9S756">
    <property type="interactions" value="239"/>
</dbReference>
<dbReference type="STRING" id="3702.Q9S756"/>
<dbReference type="PaxDb" id="3702-AT2G40300.1"/>
<dbReference type="ProteomicsDB" id="230529"/>
<dbReference type="EnsemblPlants" id="AT2G40300.1">
    <property type="protein sequence ID" value="AT2G40300.1"/>
    <property type="gene ID" value="AT2G40300"/>
</dbReference>
<dbReference type="GeneID" id="818622"/>
<dbReference type="Gramene" id="AT2G40300.1">
    <property type="protein sequence ID" value="AT2G40300.1"/>
    <property type="gene ID" value="AT2G40300"/>
</dbReference>
<dbReference type="KEGG" id="ath:AT2G40300"/>
<dbReference type="Araport" id="AT2G40300"/>
<dbReference type="TAIR" id="AT2G40300">
    <property type="gene designation" value="FER4"/>
</dbReference>
<dbReference type="eggNOG" id="KOG2332">
    <property type="taxonomic scope" value="Eukaryota"/>
</dbReference>
<dbReference type="HOGENOM" id="CLU_065681_0_0_1"/>
<dbReference type="InParanoid" id="Q9S756"/>
<dbReference type="OMA" id="WNSAKDA"/>
<dbReference type="PhylomeDB" id="Q9S756"/>
<dbReference type="BioCyc" id="ARA:AT2G40300-MONOMER"/>
<dbReference type="PRO" id="PR:Q9S756"/>
<dbReference type="Proteomes" id="UP000006548">
    <property type="component" value="Chromosome 2"/>
</dbReference>
<dbReference type="ExpressionAtlas" id="Q9S756">
    <property type="expression patterns" value="baseline and differential"/>
</dbReference>
<dbReference type="GO" id="GO:0009507">
    <property type="term" value="C:chloroplast"/>
    <property type="evidence" value="ECO:0007005"/>
    <property type="project" value="TAIR"/>
</dbReference>
<dbReference type="GO" id="GO:0009941">
    <property type="term" value="C:chloroplast envelope"/>
    <property type="evidence" value="ECO:0007005"/>
    <property type="project" value="TAIR"/>
</dbReference>
<dbReference type="GO" id="GO:0009570">
    <property type="term" value="C:chloroplast stroma"/>
    <property type="evidence" value="ECO:0007005"/>
    <property type="project" value="TAIR"/>
</dbReference>
<dbReference type="GO" id="GO:0005794">
    <property type="term" value="C:Golgi apparatus"/>
    <property type="evidence" value="ECO:0007005"/>
    <property type="project" value="TAIR"/>
</dbReference>
<dbReference type="GO" id="GO:0005739">
    <property type="term" value="C:mitochondrion"/>
    <property type="evidence" value="ECO:0000314"/>
    <property type="project" value="TAIR"/>
</dbReference>
<dbReference type="GO" id="GO:0008199">
    <property type="term" value="F:ferric iron binding"/>
    <property type="evidence" value="ECO:0007669"/>
    <property type="project" value="InterPro"/>
</dbReference>
<dbReference type="GO" id="GO:0004322">
    <property type="term" value="F:ferroxidase activity"/>
    <property type="evidence" value="ECO:0007669"/>
    <property type="project" value="UniProtKB-EC"/>
</dbReference>
<dbReference type="GO" id="GO:0009908">
    <property type="term" value="P:flower development"/>
    <property type="evidence" value="ECO:0000316"/>
    <property type="project" value="TAIR"/>
</dbReference>
<dbReference type="GO" id="GO:0006879">
    <property type="term" value="P:intracellular iron ion homeostasis"/>
    <property type="evidence" value="ECO:0007669"/>
    <property type="project" value="UniProtKB-KW"/>
</dbReference>
<dbReference type="GO" id="GO:0006826">
    <property type="term" value="P:iron ion transport"/>
    <property type="evidence" value="ECO:0000316"/>
    <property type="project" value="TAIR"/>
</dbReference>
<dbReference type="GO" id="GO:0048366">
    <property type="term" value="P:leaf development"/>
    <property type="evidence" value="ECO:0000316"/>
    <property type="project" value="TAIR"/>
</dbReference>
<dbReference type="GO" id="GO:0015979">
    <property type="term" value="P:photosynthesis"/>
    <property type="evidence" value="ECO:0000316"/>
    <property type="project" value="TAIR"/>
</dbReference>
<dbReference type="GO" id="GO:0010039">
    <property type="term" value="P:response to iron ion"/>
    <property type="evidence" value="ECO:0000270"/>
    <property type="project" value="TAIR"/>
</dbReference>
<dbReference type="GO" id="GO:0000302">
    <property type="term" value="P:response to reactive oxygen species"/>
    <property type="evidence" value="ECO:0000316"/>
    <property type="project" value="TAIR"/>
</dbReference>
<dbReference type="CDD" id="cd01056">
    <property type="entry name" value="Euk_Ferritin"/>
    <property type="match status" value="1"/>
</dbReference>
<dbReference type="FunFam" id="1.20.1260.10:FF:000006">
    <property type="entry name" value="Ferritin"/>
    <property type="match status" value="1"/>
</dbReference>
<dbReference type="Gene3D" id="1.20.1260.10">
    <property type="match status" value="1"/>
</dbReference>
<dbReference type="InterPro" id="IPR001519">
    <property type="entry name" value="Ferritin"/>
</dbReference>
<dbReference type="InterPro" id="IPR012347">
    <property type="entry name" value="Ferritin-like"/>
</dbReference>
<dbReference type="InterPro" id="IPR009040">
    <property type="entry name" value="Ferritin-like_diiron"/>
</dbReference>
<dbReference type="InterPro" id="IPR009078">
    <property type="entry name" value="Ferritin-like_SF"/>
</dbReference>
<dbReference type="InterPro" id="IPR014034">
    <property type="entry name" value="Ferritin_CS"/>
</dbReference>
<dbReference type="InterPro" id="IPR008331">
    <property type="entry name" value="Ferritin_DPS_dom"/>
</dbReference>
<dbReference type="PANTHER" id="PTHR11431">
    <property type="entry name" value="FERRITIN"/>
    <property type="match status" value="1"/>
</dbReference>
<dbReference type="PANTHER" id="PTHR11431:SF75">
    <property type="entry name" value="FERRITIN"/>
    <property type="match status" value="1"/>
</dbReference>
<dbReference type="Pfam" id="PF00210">
    <property type="entry name" value="Ferritin"/>
    <property type="match status" value="1"/>
</dbReference>
<dbReference type="SUPFAM" id="SSF47240">
    <property type="entry name" value="Ferritin-like"/>
    <property type="match status" value="1"/>
</dbReference>
<dbReference type="PROSITE" id="PS00540">
    <property type="entry name" value="FERRITIN_1"/>
    <property type="match status" value="1"/>
</dbReference>
<dbReference type="PROSITE" id="PS00204">
    <property type="entry name" value="FERRITIN_2"/>
    <property type="match status" value="1"/>
</dbReference>
<dbReference type="PROSITE" id="PS50905">
    <property type="entry name" value="FERRITIN_LIKE"/>
    <property type="match status" value="1"/>
</dbReference>
<gene>
    <name type="primary">FER4</name>
    <name type="ordered locus">At2g40300</name>
    <name type="ORF">T07M07.18</name>
    <name type="ORF">T3G21.7</name>
</gene>
<keyword id="KW-0150">Chloroplast</keyword>
<keyword id="KW-0408">Iron</keyword>
<keyword id="KW-0409">Iron storage</keyword>
<keyword id="KW-0479">Metal-binding</keyword>
<keyword id="KW-0560">Oxidoreductase</keyword>
<keyword id="KW-0934">Plastid</keyword>
<keyword id="KW-1185">Reference proteome</keyword>
<keyword id="KW-0809">Transit peptide</keyword>
<comment type="function">
    <text evidence="1">Stores iron in a soluble, non-toxic, readily available form. Important for iron homeostasis. Has ferroxidase activity. Iron is taken up in the ferrous form and deposited as ferric hydroxides after oxidation (By similarity).</text>
</comment>
<comment type="catalytic activity">
    <reaction>
        <text>4 Fe(2+) + O2 + 4 H(+) = 4 Fe(3+) + 2 H2O</text>
        <dbReference type="Rhea" id="RHEA:11148"/>
        <dbReference type="ChEBI" id="CHEBI:15377"/>
        <dbReference type="ChEBI" id="CHEBI:15378"/>
        <dbReference type="ChEBI" id="CHEBI:15379"/>
        <dbReference type="ChEBI" id="CHEBI:29033"/>
        <dbReference type="ChEBI" id="CHEBI:29034"/>
        <dbReference type="EC" id="1.16.3.1"/>
    </reaction>
</comment>
<comment type="subunit">
    <text evidence="1">Oligomer of 24 subunits. There are two types of subunits: L (light) chain and H (heavy) chain. The major chain can be light or heavy, depending on the species and tissue type. The functional molecule forms a roughly spherical shell with a diameter of 12 nm and contains a central cavity into which the insoluble mineral iron core is deposited (By similarity).</text>
</comment>
<comment type="subcellular location">
    <subcellularLocation>
        <location evidence="1">Plastid</location>
        <location evidence="1">Chloroplast</location>
    </subcellularLocation>
</comment>
<comment type="similarity">
    <text evidence="4">Belongs to the ferritin family.</text>
</comment>
<protein>
    <recommendedName>
        <fullName>Ferritin-4, chloroplastic</fullName>
        <ecNumber>1.16.3.1</ecNumber>
    </recommendedName>
</protein>
<proteinExistence type="evidence at transcript level"/>
<name>FRI4_ARATH</name>
<reference key="1">
    <citation type="journal article" date="2001" name="Biochem. J.">
        <title>Structure and differential expression of the four members of the Arabidopsis thaliana ferritin gene family.</title>
        <authorList>
            <person name="Petit J.-M."/>
            <person name="Briat J.-F."/>
            <person name="Lobreaux S."/>
        </authorList>
    </citation>
    <scope>NUCLEOTIDE SEQUENCE [MRNA]</scope>
    <source>
        <strain>cv. Columbia</strain>
    </source>
</reference>
<reference key="2">
    <citation type="journal article" date="1999" name="Genome Res.">
        <title>A cluster of ABA-regulated genes on Arabidopsis thaliana BAC T07M07.</title>
        <authorList>
            <person name="Wang M.L."/>
            <person name="Belmonte S."/>
            <person name="Kim U."/>
            <person name="Dolan M."/>
            <person name="Morris J.W."/>
            <person name="Goodman H.M."/>
        </authorList>
    </citation>
    <scope>NUCLEOTIDE SEQUENCE [GENOMIC DNA]</scope>
</reference>
<reference key="3">
    <citation type="journal article" date="1999" name="Nature">
        <title>Sequence and analysis of chromosome 2 of the plant Arabidopsis thaliana.</title>
        <authorList>
            <person name="Lin X."/>
            <person name="Kaul S."/>
            <person name="Rounsley S.D."/>
            <person name="Shea T.P."/>
            <person name="Benito M.-I."/>
            <person name="Town C.D."/>
            <person name="Fujii C.Y."/>
            <person name="Mason T.M."/>
            <person name="Bowman C.L."/>
            <person name="Barnstead M.E."/>
            <person name="Feldblyum T.V."/>
            <person name="Buell C.R."/>
            <person name="Ketchum K.A."/>
            <person name="Lee J.J."/>
            <person name="Ronning C.M."/>
            <person name="Koo H.L."/>
            <person name="Moffat K.S."/>
            <person name="Cronin L.A."/>
            <person name="Shen M."/>
            <person name="Pai G."/>
            <person name="Van Aken S."/>
            <person name="Umayam L."/>
            <person name="Tallon L.J."/>
            <person name="Gill J.E."/>
            <person name="Adams M.D."/>
            <person name="Carrera A.J."/>
            <person name="Creasy T.H."/>
            <person name="Goodman H.M."/>
            <person name="Somerville C.R."/>
            <person name="Copenhaver G.P."/>
            <person name="Preuss D."/>
            <person name="Nierman W.C."/>
            <person name="White O."/>
            <person name="Eisen J.A."/>
            <person name="Salzberg S.L."/>
            <person name="Fraser C.M."/>
            <person name="Venter J.C."/>
        </authorList>
    </citation>
    <scope>NUCLEOTIDE SEQUENCE [LARGE SCALE GENOMIC DNA]</scope>
    <source>
        <strain>cv. Columbia</strain>
    </source>
</reference>
<reference key="4">
    <citation type="journal article" date="2017" name="Plant J.">
        <title>Araport11: a complete reannotation of the Arabidopsis thaliana reference genome.</title>
        <authorList>
            <person name="Cheng C.Y."/>
            <person name="Krishnakumar V."/>
            <person name="Chan A.P."/>
            <person name="Thibaud-Nissen F."/>
            <person name="Schobel S."/>
            <person name="Town C.D."/>
        </authorList>
    </citation>
    <scope>GENOME REANNOTATION</scope>
    <source>
        <strain>cv. Columbia</strain>
    </source>
</reference>
<reference key="5">
    <citation type="journal article" date="2003" name="Science">
        <title>Empirical analysis of transcriptional activity in the Arabidopsis genome.</title>
        <authorList>
            <person name="Yamada K."/>
            <person name="Lim J."/>
            <person name="Dale J.M."/>
            <person name="Chen H."/>
            <person name="Shinn P."/>
            <person name="Palm C.J."/>
            <person name="Southwick A.M."/>
            <person name="Wu H.C."/>
            <person name="Kim C.J."/>
            <person name="Nguyen M."/>
            <person name="Pham P.K."/>
            <person name="Cheuk R.F."/>
            <person name="Karlin-Newmann G."/>
            <person name="Liu S.X."/>
            <person name="Lam B."/>
            <person name="Sakano H."/>
            <person name="Wu T."/>
            <person name="Yu G."/>
            <person name="Miranda M."/>
            <person name="Quach H.L."/>
            <person name="Tripp M."/>
            <person name="Chang C.H."/>
            <person name="Lee J.M."/>
            <person name="Toriumi M.J."/>
            <person name="Chan M.M."/>
            <person name="Tang C.C."/>
            <person name="Onodera C.S."/>
            <person name="Deng J.M."/>
            <person name="Akiyama K."/>
            <person name="Ansari Y."/>
            <person name="Arakawa T."/>
            <person name="Banh J."/>
            <person name="Banno F."/>
            <person name="Bowser L."/>
            <person name="Brooks S.Y."/>
            <person name="Carninci P."/>
            <person name="Chao Q."/>
            <person name="Choy N."/>
            <person name="Enju A."/>
            <person name="Goldsmith A.D."/>
            <person name="Gurjal M."/>
            <person name="Hansen N.F."/>
            <person name="Hayashizaki Y."/>
            <person name="Johnson-Hopson C."/>
            <person name="Hsuan V.W."/>
            <person name="Iida K."/>
            <person name="Karnes M."/>
            <person name="Khan S."/>
            <person name="Koesema E."/>
            <person name="Ishida J."/>
            <person name="Jiang P.X."/>
            <person name="Jones T."/>
            <person name="Kawai J."/>
            <person name="Kamiya A."/>
            <person name="Meyers C."/>
            <person name="Nakajima M."/>
            <person name="Narusaka M."/>
            <person name="Seki M."/>
            <person name="Sakurai T."/>
            <person name="Satou M."/>
            <person name="Tamse R."/>
            <person name="Vaysberg M."/>
            <person name="Wallender E.K."/>
            <person name="Wong C."/>
            <person name="Yamamura Y."/>
            <person name="Yuan S."/>
            <person name="Shinozaki K."/>
            <person name="Davis R.W."/>
            <person name="Theologis A."/>
            <person name="Ecker J.R."/>
        </authorList>
    </citation>
    <scope>NUCLEOTIDE SEQUENCE [LARGE SCALE MRNA]</scope>
    <source>
        <strain>cv. Columbia</strain>
    </source>
</reference>
<sequence>MLLKTVSSSSSSALSLVNFHGVKKDVSPLLPSISSNLRVSSGKSGNLTFSFRASKSSTTDALSGVVFEPFKEVKKELDLVPTSSHLSLARQKYSDECEAAINEQINVEYNVSYVYHAMYAYFDRDNIALKGLAKFFKESSLEEREHAEKLMEYQNKRGGRVKLQSIVMPLSEFEHVDKGDALYGMELALSLEKLVNEKLLNLHSVASKNNDVHLADFIESEFLTEQVEAIKLISEYVAQLRRVGKGHGTWHFNQMLLEG</sequence>